<gene>
    <name evidence="1" type="primary">purM</name>
    <name type="ordered locus">ACIAD2634</name>
</gene>
<name>PUR5_ACIAD</name>
<feature type="chain" id="PRO_0000258324" description="Phosphoribosylformylglycinamidine cyclo-ligase">
    <location>
        <begin position="1"/>
        <end position="356"/>
    </location>
</feature>
<dbReference type="EC" id="6.3.3.1" evidence="1"/>
<dbReference type="EMBL" id="CR543861">
    <property type="protein sequence ID" value="CAG69392.1"/>
    <property type="molecule type" value="Genomic_DNA"/>
</dbReference>
<dbReference type="RefSeq" id="WP_004928857.1">
    <property type="nucleotide sequence ID" value="NC_005966.1"/>
</dbReference>
<dbReference type="SMR" id="Q6F973"/>
<dbReference type="STRING" id="202950.GCA_001485005_02282"/>
<dbReference type="GeneID" id="45234913"/>
<dbReference type="KEGG" id="aci:ACIAD2634"/>
<dbReference type="eggNOG" id="COG0150">
    <property type="taxonomic scope" value="Bacteria"/>
</dbReference>
<dbReference type="HOGENOM" id="CLU_047116_0_0_6"/>
<dbReference type="OrthoDB" id="9777881at2"/>
<dbReference type="BioCyc" id="ASP62977:ACIAD_RS11980-MONOMER"/>
<dbReference type="UniPathway" id="UPA00074">
    <property type="reaction ID" value="UER00129"/>
</dbReference>
<dbReference type="Proteomes" id="UP000000430">
    <property type="component" value="Chromosome"/>
</dbReference>
<dbReference type="GO" id="GO:0005829">
    <property type="term" value="C:cytosol"/>
    <property type="evidence" value="ECO:0007669"/>
    <property type="project" value="TreeGrafter"/>
</dbReference>
<dbReference type="GO" id="GO:0005524">
    <property type="term" value="F:ATP binding"/>
    <property type="evidence" value="ECO:0007669"/>
    <property type="project" value="UniProtKB-KW"/>
</dbReference>
<dbReference type="GO" id="GO:0004637">
    <property type="term" value="F:phosphoribosylamine-glycine ligase activity"/>
    <property type="evidence" value="ECO:0007669"/>
    <property type="project" value="TreeGrafter"/>
</dbReference>
<dbReference type="GO" id="GO:0004641">
    <property type="term" value="F:phosphoribosylformylglycinamidine cyclo-ligase activity"/>
    <property type="evidence" value="ECO:0007669"/>
    <property type="project" value="UniProtKB-UniRule"/>
</dbReference>
<dbReference type="GO" id="GO:0006189">
    <property type="term" value="P:'de novo' IMP biosynthetic process"/>
    <property type="evidence" value="ECO:0007669"/>
    <property type="project" value="UniProtKB-UniRule"/>
</dbReference>
<dbReference type="GO" id="GO:0046084">
    <property type="term" value="P:adenine biosynthetic process"/>
    <property type="evidence" value="ECO:0007669"/>
    <property type="project" value="TreeGrafter"/>
</dbReference>
<dbReference type="CDD" id="cd02196">
    <property type="entry name" value="PurM"/>
    <property type="match status" value="1"/>
</dbReference>
<dbReference type="FunFam" id="3.30.1330.10:FF:000001">
    <property type="entry name" value="Phosphoribosylformylglycinamidine cyclo-ligase"/>
    <property type="match status" value="1"/>
</dbReference>
<dbReference type="FunFam" id="3.90.650.10:FF:000001">
    <property type="entry name" value="Phosphoribosylformylglycinamidine cyclo-ligase"/>
    <property type="match status" value="1"/>
</dbReference>
<dbReference type="Gene3D" id="3.90.650.10">
    <property type="entry name" value="PurM-like C-terminal domain"/>
    <property type="match status" value="1"/>
</dbReference>
<dbReference type="Gene3D" id="3.30.1330.10">
    <property type="entry name" value="PurM-like, N-terminal domain"/>
    <property type="match status" value="1"/>
</dbReference>
<dbReference type="HAMAP" id="MF_00741">
    <property type="entry name" value="AIRS"/>
    <property type="match status" value="1"/>
</dbReference>
<dbReference type="InterPro" id="IPR010918">
    <property type="entry name" value="PurM-like_C_dom"/>
</dbReference>
<dbReference type="InterPro" id="IPR036676">
    <property type="entry name" value="PurM-like_C_sf"/>
</dbReference>
<dbReference type="InterPro" id="IPR016188">
    <property type="entry name" value="PurM-like_N"/>
</dbReference>
<dbReference type="InterPro" id="IPR036921">
    <property type="entry name" value="PurM-like_N_sf"/>
</dbReference>
<dbReference type="InterPro" id="IPR004733">
    <property type="entry name" value="PurM_cligase"/>
</dbReference>
<dbReference type="NCBIfam" id="TIGR00878">
    <property type="entry name" value="purM"/>
    <property type="match status" value="1"/>
</dbReference>
<dbReference type="PANTHER" id="PTHR10520:SF12">
    <property type="entry name" value="TRIFUNCTIONAL PURINE BIOSYNTHETIC PROTEIN ADENOSINE-3"/>
    <property type="match status" value="1"/>
</dbReference>
<dbReference type="PANTHER" id="PTHR10520">
    <property type="entry name" value="TRIFUNCTIONAL PURINE BIOSYNTHETIC PROTEIN ADENOSINE-3-RELATED"/>
    <property type="match status" value="1"/>
</dbReference>
<dbReference type="Pfam" id="PF00586">
    <property type="entry name" value="AIRS"/>
    <property type="match status" value="1"/>
</dbReference>
<dbReference type="Pfam" id="PF02769">
    <property type="entry name" value="AIRS_C"/>
    <property type="match status" value="1"/>
</dbReference>
<dbReference type="SUPFAM" id="SSF56042">
    <property type="entry name" value="PurM C-terminal domain-like"/>
    <property type="match status" value="1"/>
</dbReference>
<dbReference type="SUPFAM" id="SSF55326">
    <property type="entry name" value="PurM N-terminal domain-like"/>
    <property type="match status" value="1"/>
</dbReference>
<reference key="1">
    <citation type="journal article" date="2004" name="Nucleic Acids Res.">
        <title>Unique features revealed by the genome sequence of Acinetobacter sp. ADP1, a versatile and naturally transformation competent bacterium.</title>
        <authorList>
            <person name="Barbe V."/>
            <person name="Vallenet D."/>
            <person name="Fonknechten N."/>
            <person name="Kreimeyer A."/>
            <person name="Oztas S."/>
            <person name="Labarre L."/>
            <person name="Cruveiller S."/>
            <person name="Robert C."/>
            <person name="Duprat S."/>
            <person name="Wincker P."/>
            <person name="Ornston L.N."/>
            <person name="Weissenbach J."/>
            <person name="Marliere P."/>
            <person name="Cohen G.N."/>
            <person name="Medigue C."/>
        </authorList>
    </citation>
    <scope>NUCLEOTIDE SEQUENCE [LARGE SCALE GENOMIC DNA]</scope>
    <source>
        <strain>ATCC 33305 / BD413 / ADP1</strain>
    </source>
</reference>
<accession>Q6F973</accession>
<organism>
    <name type="scientific">Acinetobacter baylyi (strain ATCC 33305 / BD413 / ADP1)</name>
    <dbReference type="NCBI Taxonomy" id="62977"/>
    <lineage>
        <taxon>Bacteria</taxon>
        <taxon>Pseudomonadati</taxon>
        <taxon>Pseudomonadota</taxon>
        <taxon>Gammaproteobacteria</taxon>
        <taxon>Moraxellales</taxon>
        <taxon>Moraxellaceae</taxon>
        <taxon>Acinetobacter</taxon>
    </lineage>
</organism>
<proteinExistence type="inferred from homology"/>
<sequence length="356" mass="37697">MSNSTSTPNTGLSYKDAGVDIEAGDALVDRIKSVAKRTTRPEVMGGLGGFGALCKIPKGYEEPVLVSGTDGVGTKLRLALNLNRHDTIGQDLVAMCVNDLLVCGAEPLFFLDYYATGHLNVDVAANVVTGIGKGCELAGCALVGGETAEMPGMYEGEDYDLAGFAVGVVEQSKIIDGSKVKAGDVLIGVASSGAHSNGYSLLRKILDVKNVDLTQEIDGRSLADAAMEPTRIYVKPVLELCKQVDVHAMAHITGGGLPGNLPRVLPNGAQAVIDEASWEWPELFKLLQREGGVEQFEMYRTFNCGVGMVIAVDAADADKTIQVLNAQGEKSWKIGHIQDNAESIEGADEKIRVIFA</sequence>
<keyword id="KW-0067">ATP-binding</keyword>
<keyword id="KW-0963">Cytoplasm</keyword>
<keyword id="KW-0436">Ligase</keyword>
<keyword id="KW-0547">Nucleotide-binding</keyword>
<keyword id="KW-0658">Purine biosynthesis</keyword>
<comment type="catalytic activity">
    <reaction evidence="1">
        <text>2-formamido-N(1)-(5-O-phospho-beta-D-ribosyl)acetamidine + ATP = 5-amino-1-(5-phospho-beta-D-ribosyl)imidazole + ADP + phosphate + H(+)</text>
        <dbReference type="Rhea" id="RHEA:23032"/>
        <dbReference type="ChEBI" id="CHEBI:15378"/>
        <dbReference type="ChEBI" id="CHEBI:30616"/>
        <dbReference type="ChEBI" id="CHEBI:43474"/>
        <dbReference type="ChEBI" id="CHEBI:137981"/>
        <dbReference type="ChEBI" id="CHEBI:147287"/>
        <dbReference type="ChEBI" id="CHEBI:456216"/>
        <dbReference type="EC" id="6.3.3.1"/>
    </reaction>
</comment>
<comment type="pathway">
    <text evidence="1">Purine metabolism; IMP biosynthesis via de novo pathway; 5-amino-1-(5-phospho-D-ribosyl)imidazole from N(2)-formyl-N(1)-(5-phospho-D-ribosyl)glycinamide: step 2/2.</text>
</comment>
<comment type="subcellular location">
    <subcellularLocation>
        <location evidence="1">Cytoplasm</location>
    </subcellularLocation>
</comment>
<comment type="similarity">
    <text evidence="1">Belongs to the AIR synthase family.</text>
</comment>
<evidence type="ECO:0000255" key="1">
    <source>
        <dbReference type="HAMAP-Rule" id="MF_00741"/>
    </source>
</evidence>
<protein>
    <recommendedName>
        <fullName evidence="1">Phosphoribosylformylglycinamidine cyclo-ligase</fullName>
        <ecNumber evidence="1">6.3.3.1</ecNumber>
    </recommendedName>
    <alternativeName>
        <fullName evidence="1">AIR synthase</fullName>
    </alternativeName>
    <alternativeName>
        <fullName evidence="1">AIRS</fullName>
    </alternativeName>
    <alternativeName>
        <fullName evidence="1">Phosphoribosyl-aminoimidazole synthetase</fullName>
    </alternativeName>
</protein>